<dbReference type="EMBL" id="AEDF01000024">
    <property type="protein sequence ID" value="EFN36753.1"/>
    <property type="molecule type" value="Genomic_DNA"/>
</dbReference>
<dbReference type="EMBL" id="CP002185">
    <property type="protein sequence ID" value="ADT75453.1"/>
    <property type="molecule type" value="Genomic_DNA"/>
</dbReference>
<dbReference type="EMBL" id="CP002967">
    <property type="protein sequence ID" value="AFH11617.1"/>
    <property type="molecule type" value="Genomic_DNA"/>
</dbReference>
<dbReference type="SMR" id="E0J500"/>
<dbReference type="KEGG" id="ell:WFL_09790"/>
<dbReference type="KEGG" id="elw:ECW_m1994"/>
<dbReference type="PATRIC" id="fig|566546.30.peg.2037"/>
<dbReference type="HOGENOM" id="CLU_117621_2_1_6"/>
<dbReference type="Proteomes" id="UP000008525">
    <property type="component" value="Chromosome"/>
</dbReference>
<dbReference type="GO" id="GO:0005829">
    <property type="term" value="C:cytosol"/>
    <property type="evidence" value="ECO:0007669"/>
    <property type="project" value="UniProtKB-ARBA"/>
</dbReference>
<dbReference type="GO" id="GO:0003677">
    <property type="term" value="F:DNA binding"/>
    <property type="evidence" value="ECO:0007669"/>
    <property type="project" value="UniProtKB-KW"/>
</dbReference>
<dbReference type="CDD" id="cd04458">
    <property type="entry name" value="CSP_CDS"/>
    <property type="match status" value="1"/>
</dbReference>
<dbReference type="FunFam" id="2.40.50.140:FF:000006">
    <property type="entry name" value="Cold shock protein CspC"/>
    <property type="match status" value="1"/>
</dbReference>
<dbReference type="Gene3D" id="2.40.50.140">
    <property type="entry name" value="Nucleic acid-binding proteins"/>
    <property type="match status" value="1"/>
</dbReference>
<dbReference type="InterPro" id="IPR012156">
    <property type="entry name" value="Cold_shock_CspA"/>
</dbReference>
<dbReference type="InterPro" id="IPR050181">
    <property type="entry name" value="Cold_shock_domain"/>
</dbReference>
<dbReference type="InterPro" id="IPR011129">
    <property type="entry name" value="CSD"/>
</dbReference>
<dbReference type="InterPro" id="IPR019844">
    <property type="entry name" value="CSD_CS"/>
</dbReference>
<dbReference type="InterPro" id="IPR002059">
    <property type="entry name" value="CSP_DNA-bd"/>
</dbReference>
<dbReference type="InterPro" id="IPR012340">
    <property type="entry name" value="NA-bd_OB-fold"/>
</dbReference>
<dbReference type="NCBIfam" id="NF007062">
    <property type="entry name" value="PRK09507.1"/>
    <property type="match status" value="1"/>
</dbReference>
<dbReference type="NCBIfam" id="NF008190">
    <property type="entry name" value="PRK10943.1"/>
    <property type="match status" value="1"/>
</dbReference>
<dbReference type="PANTHER" id="PTHR11544">
    <property type="entry name" value="COLD SHOCK DOMAIN CONTAINING PROTEINS"/>
    <property type="match status" value="1"/>
</dbReference>
<dbReference type="Pfam" id="PF00313">
    <property type="entry name" value="CSD"/>
    <property type="match status" value="1"/>
</dbReference>
<dbReference type="PIRSF" id="PIRSF002599">
    <property type="entry name" value="Cold_shock_A"/>
    <property type="match status" value="1"/>
</dbReference>
<dbReference type="PRINTS" id="PR00050">
    <property type="entry name" value="COLDSHOCK"/>
</dbReference>
<dbReference type="SMART" id="SM00357">
    <property type="entry name" value="CSP"/>
    <property type="match status" value="1"/>
</dbReference>
<dbReference type="SUPFAM" id="SSF50249">
    <property type="entry name" value="Nucleic acid-binding proteins"/>
    <property type="match status" value="1"/>
</dbReference>
<dbReference type="PROSITE" id="PS00352">
    <property type="entry name" value="CSD_1"/>
    <property type="match status" value="1"/>
</dbReference>
<dbReference type="PROSITE" id="PS51857">
    <property type="entry name" value="CSD_2"/>
    <property type="match status" value="1"/>
</dbReference>
<reference key="1">
    <citation type="submission" date="2010-07" db="EMBL/GenBank/DDBJ databases">
        <title>The draft genome of Escherichia coli W.</title>
        <authorList>
            <consortium name="US DOE Joint Genome Institute (JGI-PGF)"/>
            <person name="Lucas S."/>
            <person name="Copeland A."/>
            <person name="Lapidus A."/>
            <person name="Cheng J.-F."/>
            <person name="Bruce D."/>
            <person name="Goodwin L."/>
            <person name="Pitluck S."/>
            <person name="Land M.L."/>
            <person name="Hauser L."/>
            <person name="Chang Y.-J."/>
            <person name="Jeffries C."/>
            <person name="Tremaine M."/>
            <person name="Landick R."/>
            <person name="Keating D."/>
            <person name="Woyke T.J."/>
        </authorList>
    </citation>
    <scope>NUCLEOTIDE SEQUENCE [LARGE SCALE GENOMIC DNA]</scope>
    <source>
        <strain>ATCC 9637 / CCM 2024 / DSM 1116 / LMG 11080 / NBRC 13500 / NCIMB 8666 / NRRL B-766 / W</strain>
    </source>
</reference>
<reference key="2">
    <citation type="journal article" date="2011" name="BMC Genomics">
        <title>The genome sequence of E. coli W (ATCC 9637): comparative genome analysis and an improved genome-scale reconstruction of E. coli.</title>
        <authorList>
            <person name="Archer C.T."/>
            <person name="Kim J.F."/>
            <person name="Jeong H."/>
            <person name="Park J.H."/>
            <person name="Vickers C.E."/>
            <person name="Lee S.Y."/>
            <person name="Nielsen L.K."/>
        </authorList>
    </citation>
    <scope>NUCLEOTIDE SEQUENCE [LARGE SCALE GENOMIC DNA]</scope>
    <source>
        <strain>ATCC 9637 / CCM 2024 / DSM 1116 / LMG 11080 / NBRC 13500 / NCIMB 8666 / NRRL B-766 / W</strain>
    </source>
</reference>
<reference key="3">
    <citation type="journal article" date="2012" name="J. Ind. Microbiol. Biotechnol.">
        <title>Optical mapping and sequencing of the Escherichia coli KO11 genome reveal extensive chromosomal rearrangements, and multiple tandem copies of the Zymomonas mobilis pdc and adhB genes.</title>
        <authorList>
            <person name="Turner P.C."/>
            <person name="Yomano L.P."/>
            <person name="Jarboe L.R."/>
            <person name="York S.W."/>
            <person name="Baggett C.L."/>
            <person name="Moritz B.E."/>
            <person name="Zentz E.B."/>
            <person name="Shanmugam K.T."/>
            <person name="Ingram L.O."/>
        </authorList>
    </citation>
    <scope>NUCLEOTIDE SEQUENCE [LARGE SCALE GENOMIC DNA]</scope>
    <source>
        <strain>ATCC 9637 / CCM 2024 / DSM 1116 / LMG 11080 / NBRC 13500 / NCIMB 8666 / NRRL B-766 / W</strain>
    </source>
</reference>
<reference key="4">
    <citation type="journal article" date="1999" name="Rapid Commun. Mass Spectrom.">
        <title>Detection and identification of low-mass peptides and proteins from solvent suspensions of Escherichia coli by high performance liquid chromatography fractionation and matrix-assisted laser desorption/ionization mass spectrometry.</title>
        <authorList>
            <person name="Dai Y."/>
            <person name="Li L."/>
            <person name="Roser D.C."/>
            <person name="Long S.R."/>
        </authorList>
    </citation>
    <scope>MASS SPECTROMETRY</scope>
    <source>
        <strain>ATCC 9637 / CCM 2024 / DSM 1116 / LMG 11080 / NBRC 13500 / NCIMB 8666 / NRRL B-766 / W</strain>
    </source>
</reference>
<keyword id="KW-0010">Activator</keyword>
<keyword id="KW-0963">Cytoplasm</keyword>
<keyword id="KW-0238">DNA-binding</keyword>
<keyword id="KW-0804">Transcription</keyword>
<keyword id="KW-0805">Transcription regulation</keyword>
<sequence>MAKIKGQVKWFNESKGFGFITPADGSKDVFVHFSAIQGNGFKTLAEGQNVEFEIQDGQKGPAAVNVTAI</sequence>
<accession>E0J500</accession>
<accession>H9Y2G5</accession>
<organism>
    <name type="scientific">Escherichia coli (strain ATCC 9637 / CCM 2024 / DSM 1116 / LMG 11080 / NBRC 13500 / NCIMB 8666 / NRRL B-766 / W)</name>
    <dbReference type="NCBI Taxonomy" id="566546"/>
    <lineage>
        <taxon>Bacteria</taxon>
        <taxon>Pseudomonadati</taxon>
        <taxon>Pseudomonadota</taxon>
        <taxon>Gammaproteobacteria</taxon>
        <taxon>Enterobacterales</taxon>
        <taxon>Enterobacteriaceae</taxon>
        <taxon>Escherichia</taxon>
    </lineage>
</organism>
<comment type="subcellular location">
    <subcellularLocation>
        <location evidence="1">Cytoplasm</location>
    </subcellularLocation>
</comment>
<comment type="mass spectrometry"/>
<proteinExistence type="evidence at protein level"/>
<name>CSPC_ECOLW</name>
<gene>
    <name type="primary">cspC</name>
    <name type="ordered locus">ECW_m1994</name>
    <name type="ordered locus">WFL_09790</name>
    <name type="ORF">EschWDRAFT_3657</name>
</gene>
<protein>
    <recommendedName>
        <fullName>Cold shock-like protein CspC</fullName>
        <shortName>CSP-C</shortName>
    </recommendedName>
</protein>
<feature type="initiator methionine" description="Removed" evidence="3">
    <location>
        <position position="1"/>
    </location>
</feature>
<feature type="chain" id="PRO_0000408738" description="Cold shock-like protein CspC">
    <location>
        <begin position="2"/>
        <end position="69"/>
    </location>
</feature>
<feature type="domain" description="CSD">
    <location>
        <begin position="3"/>
        <end position="68"/>
    </location>
</feature>
<evidence type="ECO:0000250" key="1"/>
<evidence type="ECO:0000269" key="2">
    <source>
    </source>
</evidence>
<evidence type="ECO:0000305" key="3"/>